<name>ARHG1_RAT</name>
<comment type="function">
    <text evidence="1 8">Seems to play a role in the regulation of RhoA GTPase by guanine nucleotide-binding alpha-12 (GNA12) and alpha-13 (GNA13) subunits. Acts as a GTPase-activating protein (GAP) for GNA12 and GNA13, and as guanine nucleotide exchange factor (GEF) for RhoA GTPase. Activated G alpha 13/GNA13 stimulates the RhoGEF activity through interaction with the RGS-like domain. This GEF activity is inhibited by binding to activated GNA12 (By similarity). Mediates angiotensin-2-induced RhoA activation. In lymphoid follicles, may trigger activation of GNA13 as part of S1PR2-dependent signaling pathway that leads to inhibition of germinal center (GC) B cell growth and migration outside the GC niche.</text>
</comment>
<comment type="subunit">
    <text evidence="1">Interacts with RHOA, GNA12 and GNA13. Homooligomerizes through the coiled coil region. Interacts with CTNNAL1. May interact with CCPG1 (By similarity).</text>
</comment>
<comment type="subcellular location">
    <subcellularLocation>
        <location evidence="1">Cytoplasm</location>
    </subcellularLocation>
    <subcellularLocation>
        <location evidence="1">Membrane</location>
    </subcellularLocation>
    <text evidence="1">Translocated to the membrane by activated GNA13 or LPA stimulation.</text>
</comment>
<comment type="domain">
    <text evidence="1">The RGSL domain, also known as rgRGS domain, is necessary but not sufficient for full GAP activity.</text>
</comment>
<comment type="domain">
    <text evidence="1">The DH domain is involved in interaction with CCPG1.</text>
</comment>
<comment type="PTM">
    <text evidence="1">Phosphorylated by PKCA. Angiotensin-2 induced Tyr-736 phosphorylation is mediated by JAK2.</text>
</comment>
<accession>Q9Z1I6</accession>
<dbReference type="EMBL" id="AJ236911">
    <property type="protein sequence ID" value="CAA15426.1"/>
    <property type="molecule type" value="mRNA"/>
</dbReference>
<dbReference type="SMR" id="Q9Z1I6"/>
<dbReference type="FunCoup" id="Q9Z1I6">
    <property type="interactions" value="1214"/>
</dbReference>
<dbReference type="IntAct" id="Q9Z1I6">
    <property type="interactions" value="4"/>
</dbReference>
<dbReference type="STRING" id="10116.ENSRNOP00000072904"/>
<dbReference type="GlyGen" id="Q9Z1I6">
    <property type="glycosylation" value="1 site"/>
</dbReference>
<dbReference type="iPTMnet" id="Q9Z1I6"/>
<dbReference type="PhosphoSitePlus" id="Q9Z1I6"/>
<dbReference type="jPOST" id="Q9Z1I6"/>
<dbReference type="PaxDb" id="10116-ENSRNOP00000059325"/>
<dbReference type="UCSC" id="RGD:620951">
    <property type="organism name" value="rat"/>
</dbReference>
<dbReference type="AGR" id="RGD:620951"/>
<dbReference type="RGD" id="620951">
    <property type="gene designation" value="Arhgef1"/>
</dbReference>
<dbReference type="eggNOG" id="KOG3520">
    <property type="taxonomic scope" value="Eukaryota"/>
</dbReference>
<dbReference type="InParanoid" id="Q9Z1I6"/>
<dbReference type="PhylomeDB" id="Q9Z1I6"/>
<dbReference type="Reactome" id="R-RNO-193648">
    <property type="pathway name" value="NRAGE signals death through JNK"/>
</dbReference>
<dbReference type="Reactome" id="R-RNO-416482">
    <property type="pathway name" value="G alpha (12/13) signalling events"/>
</dbReference>
<dbReference type="Reactome" id="R-RNO-8980692">
    <property type="pathway name" value="RHOA GTPase cycle"/>
</dbReference>
<dbReference type="Reactome" id="R-RNO-9013026">
    <property type="pathway name" value="RHOB GTPase cycle"/>
</dbReference>
<dbReference type="PRO" id="PR:Q9Z1I6"/>
<dbReference type="Proteomes" id="UP000002494">
    <property type="component" value="Unplaced"/>
</dbReference>
<dbReference type="GO" id="GO:0005737">
    <property type="term" value="C:cytoplasm"/>
    <property type="evidence" value="ECO:0000318"/>
    <property type="project" value="GO_Central"/>
</dbReference>
<dbReference type="GO" id="GO:0016020">
    <property type="term" value="C:membrane"/>
    <property type="evidence" value="ECO:0007669"/>
    <property type="project" value="UniProtKB-SubCell"/>
</dbReference>
<dbReference type="GO" id="GO:0001664">
    <property type="term" value="F:G protein-coupled receptor binding"/>
    <property type="evidence" value="ECO:0000318"/>
    <property type="project" value="GO_Central"/>
</dbReference>
<dbReference type="GO" id="GO:0005096">
    <property type="term" value="F:GTPase activator activity"/>
    <property type="evidence" value="ECO:0007669"/>
    <property type="project" value="UniProtKB-KW"/>
</dbReference>
<dbReference type="GO" id="GO:0005085">
    <property type="term" value="F:guanyl-nucleotide exchange factor activity"/>
    <property type="evidence" value="ECO:0000266"/>
    <property type="project" value="RGD"/>
</dbReference>
<dbReference type="GO" id="GO:0007186">
    <property type="term" value="P:G protein-coupled receptor signaling pathway"/>
    <property type="evidence" value="ECO:0000318"/>
    <property type="project" value="GO_Central"/>
</dbReference>
<dbReference type="GO" id="GO:0007019">
    <property type="term" value="P:microtubule depolymerization"/>
    <property type="evidence" value="ECO:0000315"/>
    <property type="project" value="RGD"/>
</dbReference>
<dbReference type="GO" id="GO:0160221">
    <property type="term" value="P:Rho-activating G protein-coupled receptor signaling pathway"/>
    <property type="evidence" value="ECO:0000266"/>
    <property type="project" value="RGD"/>
</dbReference>
<dbReference type="CDD" id="cd08755">
    <property type="entry name" value="RGS_p115RhoGEF"/>
    <property type="match status" value="1"/>
</dbReference>
<dbReference type="CDD" id="cd00160">
    <property type="entry name" value="RhoGEF"/>
    <property type="match status" value="1"/>
</dbReference>
<dbReference type="FunFam" id="1.20.900.10:FF:000006">
    <property type="entry name" value="Rho guanine nucleotide exchange factor (GEF) 11"/>
    <property type="match status" value="1"/>
</dbReference>
<dbReference type="FunFam" id="1.10.167.10:FF:000012">
    <property type="entry name" value="Rho guanine nucleotide exchange factor 1"/>
    <property type="match status" value="1"/>
</dbReference>
<dbReference type="FunFam" id="2.30.29.30:FF:000072">
    <property type="entry name" value="Rho guanine nucleotide exchange factor 1"/>
    <property type="match status" value="1"/>
</dbReference>
<dbReference type="Gene3D" id="1.20.900.10">
    <property type="entry name" value="Dbl homology (DH) domain"/>
    <property type="match status" value="1"/>
</dbReference>
<dbReference type="Gene3D" id="2.30.29.30">
    <property type="entry name" value="Pleckstrin-homology domain (PH domain)/Phosphotyrosine-binding domain (PTB)"/>
    <property type="match status" value="1"/>
</dbReference>
<dbReference type="Gene3D" id="1.10.167.10">
    <property type="entry name" value="Regulator of G-protein Signalling 4, domain 2"/>
    <property type="match status" value="1"/>
</dbReference>
<dbReference type="InterPro" id="IPR035899">
    <property type="entry name" value="DBL_dom_sf"/>
</dbReference>
<dbReference type="InterPro" id="IPR000219">
    <property type="entry name" value="DH_dom"/>
</dbReference>
<dbReference type="InterPro" id="IPR037887">
    <property type="entry name" value="p115RhoGEF_RGS"/>
</dbReference>
<dbReference type="InterPro" id="IPR011993">
    <property type="entry name" value="PH-like_dom_sf"/>
</dbReference>
<dbReference type="InterPro" id="IPR041020">
    <property type="entry name" value="PH_16"/>
</dbReference>
<dbReference type="InterPro" id="IPR001849">
    <property type="entry name" value="PH_domain"/>
</dbReference>
<dbReference type="InterPro" id="IPR015212">
    <property type="entry name" value="RGS-like_dom"/>
</dbReference>
<dbReference type="InterPro" id="IPR036305">
    <property type="entry name" value="RGS_sf"/>
</dbReference>
<dbReference type="InterPro" id="IPR044926">
    <property type="entry name" value="RGS_subdomain_2"/>
</dbReference>
<dbReference type="PANTHER" id="PTHR45872:SF4">
    <property type="entry name" value="RHO GUANINE NUCLEOTIDE EXCHANGE FACTOR 1"/>
    <property type="match status" value="1"/>
</dbReference>
<dbReference type="PANTHER" id="PTHR45872">
    <property type="entry name" value="RHO GUANINE NUCLEOTIDE EXCHANGE FACTOR 2, ISOFORM D"/>
    <property type="match status" value="1"/>
</dbReference>
<dbReference type="Pfam" id="PF17838">
    <property type="entry name" value="PH_16"/>
    <property type="match status" value="1"/>
</dbReference>
<dbReference type="Pfam" id="PF09128">
    <property type="entry name" value="RGS-like"/>
    <property type="match status" value="1"/>
</dbReference>
<dbReference type="Pfam" id="PF00621">
    <property type="entry name" value="RhoGEF"/>
    <property type="match status" value="1"/>
</dbReference>
<dbReference type="SMART" id="SM00233">
    <property type="entry name" value="PH"/>
    <property type="match status" value="1"/>
</dbReference>
<dbReference type="SMART" id="SM00325">
    <property type="entry name" value="RhoGEF"/>
    <property type="match status" value="1"/>
</dbReference>
<dbReference type="SUPFAM" id="SSF48065">
    <property type="entry name" value="DBL homology domain (DH-domain)"/>
    <property type="match status" value="1"/>
</dbReference>
<dbReference type="SUPFAM" id="SSF50729">
    <property type="entry name" value="PH domain-like"/>
    <property type="match status" value="1"/>
</dbReference>
<dbReference type="SUPFAM" id="SSF48097">
    <property type="entry name" value="Regulator of G-protein signaling, RGS"/>
    <property type="match status" value="1"/>
</dbReference>
<dbReference type="PROSITE" id="PS50010">
    <property type="entry name" value="DH_2"/>
    <property type="match status" value="1"/>
</dbReference>
<dbReference type="PROSITE" id="PS50003">
    <property type="entry name" value="PH_DOMAIN"/>
    <property type="match status" value="1"/>
</dbReference>
<gene>
    <name type="primary">Arhgef1</name>
    <name type="synonym">Lsc</name>
</gene>
<evidence type="ECO:0000250" key="1"/>
<evidence type="ECO:0000250" key="2">
    <source>
        <dbReference type="UniProtKB" id="Q61210"/>
    </source>
</evidence>
<evidence type="ECO:0000250" key="3">
    <source>
        <dbReference type="UniProtKB" id="Q92888"/>
    </source>
</evidence>
<evidence type="ECO:0000255" key="4"/>
<evidence type="ECO:0000255" key="5">
    <source>
        <dbReference type="PROSITE-ProRule" id="PRU00062"/>
    </source>
</evidence>
<evidence type="ECO:0000255" key="6">
    <source>
        <dbReference type="PROSITE-ProRule" id="PRU00145"/>
    </source>
</evidence>
<evidence type="ECO:0000256" key="7">
    <source>
        <dbReference type="SAM" id="MobiDB-lite"/>
    </source>
</evidence>
<evidence type="ECO:0000269" key="8">
    <source>
    </source>
</evidence>
<protein>
    <recommendedName>
        <fullName>Rho guanine nucleotide exchange factor 1</fullName>
    </recommendedName>
    <alternativeName>
        <fullName>Lbc's second cousin</fullName>
    </alternativeName>
</protein>
<feature type="chain" id="PRO_0000080908" description="Rho guanine nucleotide exchange factor 1">
    <location>
        <begin position="1"/>
        <end position="919"/>
    </location>
</feature>
<feature type="domain" description="RGSL">
    <location>
        <begin position="39"/>
        <end position="230"/>
    </location>
</feature>
<feature type="domain" description="DH" evidence="5">
    <location>
        <begin position="414"/>
        <end position="603"/>
    </location>
</feature>
<feature type="domain" description="PH" evidence="6">
    <location>
        <begin position="645"/>
        <end position="758"/>
    </location>
</feature>
<feature type="region of interest" description="Disordered" evidence="7">
    <location>
        <begin position="247"/>
        <end position="402"/>
    </location>
</feature>
<feature type="region of interest" description="Disordered" evidence="7">
    <location>
        <begin position="761"/>
        <end position="800"/>
    </location>
</feature>
<feature type="region of interest" description="Disordered" evidence="7">
    <location>
        <begin position="839"/>
        <end position="865"/>
    </location>
</feature>
<feature type="coiled-coil region" evidence="4">
    <location>
        <begin position="864"/>
        <end position="893"/>
    </location>
</feature>
<feature type="compositionally biased region" description="Basic and acidic residues" evidence="7">
    <location>
        <begin position="281"/>
        <end position="310"/>
    </location>
</feature>
<feature type="compositionally biased region" description="Acidic residues" evidence="7">
    <location>
        <begin position="363"/>
        <end position="379"/>
    </location>
</feature>
<feature type="compositionally biased region" description="Low complexity" evidence="7">
    <location>
        <begin position="775"/>
        <end position="787"/>
    </location>
</feature>
<feature type="modified residue" description="Phosphoserine" evidence="3">
    <location>
        <position position="372"/>
    </location>
</feature>
<feature type="modified residue" description="Phosphothreonine" evidence="3">
    <location>
        <position position="693"/>
    </location>
</feature>
<feature type="modified residue" description="Phosphotyrosine; by JAK2" evidence="3">
    <location>
        <position position="736"/>
    </location>
</feature>
<feature type="modified residue" description="Phosphoserine" evidence="2">
    <location>
        <position position="904"/>
    </location>
</feature>
<proteinExistence type="evidence at transcript level"/>
<organism>
    <name type="scientific">Rattus norvegicus</name>
    <name type="common">Rat</name>
    <dbReference type="NCBI Taxonomy" id="10116"/>
    <lineage>
        <taxon>Eukaryota</taxon>
        <taxon>Metazoa</taxon>
        <taxon>Chordata</taxon>
        <taxon>Craniata</taxon>
        <taxon>Vertebrata</taxon>
        <taxon>Euteleostomi</taxon>
        <taxon>Mammalia</taxon>
        <taxon>Eutheria</taxon>
        <taxon>Euarchontoglires</taxon>
        <taxon>Glires</taxon>
        <taxon>Rodentia</taxon>
        <taxon>Myomorpha</taxon>
        <taxon>Muroidea</taxon>
        <taxon>Muridae</taxon>
        <taxon>Murinae</taxon>
        <taxon>Rattus</taxon>
    </lineage>
</organism>
<reference key="1">
    <citation type="submission" date="1999-02" db="EMBL/GenBank/DDBJ databases">
        <title>Cloning of a rat homologue of lsc, a mouse oncogene with structural similarities to the Dbl family of guanine nucleotide exchange factors.</title>
        <authorList>
            <person name="Steinbrenner H."/>
            <person name="Wuensche C."/>
            <person name="Seissler J."/>
        </authorList>
    </citation>
    <scope>NUCLEOTIDE SEQUENCE [MRNA]</scope>
</reference>
<reference key="2">
    <citation type="journal article" date="2010" name="Nat. Med.">
        <title>The Rho exchange factor Arhgef1 mediates the effects of angiotensin II on vascular tone and blood pressure.</title>
        <authorList>
            <person name="Guilluy C."/>
            <person name="Bregeon J."/>
            <person name="Toumaniantz G."/>
            <person name="Rolli-Derkinderen M."/>
            <person name="Retailleau K."/>
            <person name="Loufrani L."/>
            <person name="Henrion D."/>
            <person name="Scalbert E."/>
            <person name="Bril A."/>
            <person name="Torres R.M."/>
            <person name="Offermanns S."/>
            <person name="Pacaud P."/>
            <person name="Loirand G."/>
        </authorList>
    </citation>
    <scope>FUNCTION</scope>
</reference>
<sequence>MGEVAGGAAPGPPRSGLVSIIIGAEDEDFENELEANPEDQNSQFQSLEQVKRRPAHLMALLQHVALQFEPGPLLCCLHADMLSSLGPKEAKKAFLDFYHSFLEKTAVLRVPVPPSVAFELDRTRPDLISEDVQRRFIQEVVQSQQAAVTRQLEDFRSKRLMGMTPWEQELSLLEPWIGKDRGNYEARERHVAERLLSHLEEMQHTISTDEEKSAAVVTAISLYMRHLGVRTKSGDKKSGRNFFRKKVMGNRRSDEPPKTKKGLSSILDPARWNRGEPSAPDCRHLKVEVDEKPGPADRKGSLGISSRDRTVGTPGQDNPGVSLHPLSVDSLDSREPGVDTPQEPGDTPPQGPTSLEPLAPPESTEDNGETESPEPGDDGEPGRSGLEQEPEEPPGWRELVPSDTLLGLPKNQVKRQEVISELLVTEAAHVRMLRVLHDLFYQPMAEGGFFPLEELQNIFPSLDELIEVHSLFLDRLMKRRQESGYLIEEIGDVLLARFDGAEGSWFQKISSRFCSRQSFALEQLKAKQRKEPRFCAFVQEAESRPRCRRLQLKDMIPTEMQRLTKYPLLLQSIGQNTEEPAERAKVELAAECCREILHHVNQAVRDMEDLLRLKDYQRRLDLTHLRQSNDPMLSEFKNLDITKKKLVHEGPLTWRLTKDKAVEVHVLLLDDLLLLLQRQDEGCCSSHTSRTLTPTPDGKTMLRPVLRLTSAMTREVATDHKAFYVIFTWDQEAQIYELVAQTSSERKSWCALITETAGSLKVPAPASRPKPRPSPSSTREPLLSSSENGTGGTEAAPADARTERILNDLLPFCRPGPEGQLAATALQKVLSLKQILLSTEEDSGAGPPRDGDGVPGGGAPGPTHTQEVEENLLSLEVVIKQLEELEEEFCRLRPFLSQLGEILSPNLAAPERSAQTGLS</sequence>
<keyword id="KW-0175">Coiled coil</keyword>
<keyword id="KW-0963">Cytoplasm</keyword>
<keyword id="KW-0343">GTPase activation</keyword>
<keyword id="KW-0344">Guanine-nucleotide releasing factor</keyword>
<keyword id="KW-0472">Membrane</keyword>
<keyword id="KW-0597">Phosphoprotein</keyword>
<keyword id="KW-1185">Reference proteome</keyword>